<accession>Q5HQG2</accession>
<sequence>MRYTILTKGDSKSNALKHKMINHMKDFQMVEDSENPEIVISVGGDGTLLQAFHQYSHMLSKVAFVGIHTGHLGFYADWLPHEVEKLIIEINNSEFQVIEYPLLELIVRYNDNGYETRYLALNEATMKTENGSTLVVDVNIRGKHFERFRGDGLCISTPSGSTAYNKALGGALIHPSLEAMQIAEIASINNRVFRTVGSPLVLPKHHTCLITPVNHDTIRTTIDHVSIKHKNVNAIQYRVANEKVRFARFRPFPFWKRVHDSFISSDDER</sequence>
<evidence type="ECO:0000255" key="1">
    <source>
        <dbReference type="HAMAP-Rule" id="MF_00361"/>
    </source>
</evidence>
<dbReference type="EC" id="2.7.1.23" evidence="1"/>
<dbReference type="EMBL" id="CP000029">
    <property type="protein sequence ID" value="AAW54002.1"/>
    <property type="molecule type" value="Genomic_DNA"/>
</dbReference>
<dbReference type="RefSeq" id="WP_001829306.1">
    <property type="nucleotide sequence ID" value="NC_002976.3"/>
</dbReference>
<dbReference type="SMR" id="Q5HQG2"/>
<dbReference type="STRING" id="176279.SERP0587"/>
<dbReference type="KEGG" id="ser:SERP0587"/>
<dbReference type="eggNOG" id="COG0061">
    <property type="taxonomic scope" value="Bacteria"/>
</dbReference>
<dbReference type="HOGENOM" id="CLU_008831_0_3_9"/>
<dbReference type="Proteomes" id="UP000000531">
    <property type="component" value="Chromosome"/>
</dbReference>
<dbReference type="GO" id="GO:0005737">
    <property type="term" value="C:cytoplasm"/>
    <property type="evidence" value="ECO:0007669"/>
    <property type="project" value="UniProtKB-SubCell"/>
</dbReference>
<dbReference type="GO" id="GO:0005524">
    <property type="term" value="F:ATP binding"/>
    <property type="evidence" value="ECO:0007669"/>
    <property type="project" value="UniProtKB-KW"/>
</dbReference>
<dbReference type="GO" id="GO:0046872">
    <property type="term" value="F:metal ion binding"/>
    <property type="evidence" value="ECO:0007669"/>
    <property type="project" value="UniProtKB-UniRule"/>
</dbReference>
<dbReference type="GO" id="GO:0051287">
    <property type="term" value="F:NAD binding"/>
    <property type="evidence" value="ECO:0007669"/>
    <property type="project" value="UniProtKB-ARBA"/>
</dbReference>
<dbReference type="GO" id="GO:0003951">
    <property type="term" value="F:NAD+ kinase activity"/>
    <property type="evidence" value="ECO:0007669"/>
    <property type="project" value="UniProtKB-UniRule"/>
</dbReference>
<dbReference type="GO" id="GO:0019674">
    <property type="term" value="P:NAD metabolic process"/>
    <property type="evidence" value="ECO:0007669"/>
    <property type="project" value="InterPro"/>
</dbReference>
<dbReference type="GO" id="GO:0006741">
    <property type="term" value="P:NADP biosynthetic process"/>
    <property type="evidence" value="ECO:0007669"/>
    <property type="project" value="UniProtKB-UniRule"/>
</dbReference>
<dbReference type="FunFam" id="2.60.200.30:FF:000002">
    <property type="entry name" value="NAD kinase"/>
    <property type="match status" value="1"/>
</dbReference>
<dbReference type="Gene3D" id="3.40.50.10330">
    <property type="entry name" value="Probable inorganic polyphosphate/atp-NAD kinase, domain 1"/>
    <property type="match status" value="1"/>
</dbReference>
<dbReference type="Gene3D" id="2.60.200.30">
    <property type="entry name" value="Probable inorganic polyphosphate/atp-NAD kinase, domain 2"/>
    <property type="match status" value="1"/>
</dbReference>
<dbReference type="HAMAP" id="MF_00361">
    <property type="entry name" value="NAD_kinase"/>
    <property type="match status" value="1"/>
</dbReference>
<dbReference type="InterPro" id="IPR017438">
    <property type="entry name" value="ATP-NAD_kinase_N"/>
</dbReference>
<dbReference type="InterPro" id="IPR017437">
    <property type="entry name" value="ATP-NAD_kinase_PpnK-typ_C"/>
</dbReference>
<dbReference type="InterPro" id="IPR016064">
    <property type="entry name" value="NAD/diacylglycerol_kinase_sf"/>
</dbReference>
<dbReference type="InterPro" id="IPR002504">
    <property type="entry name" value="NADK"/>
</dbReference>
<dbReference type="NCBIfam" id="NF003424">
    <property type="entry name" value="PRK04885.1"/>
    <property type="match status" value="1"/>
</dbReference>
<dbReference type="PANTHER" id="PTHR20275">
    <property type="entry name" value="NAD KINASE"/>
    <property type="match status" value="1"/>
</dbReference>
<dbReference type="PANTHER" id="PTHR20275:SF0">
    <property type="entry name" value="NAD KINASE"/>
    <property type="match status" value="1"/>
</dbReference>
<dbReference type="Pfam" id="PF01513">
    <property type="entry name" value="NAD_kinase"/>
    <property type="match status" value="1"/>
</dbReference>
<dbReference type="Pfam" id="PF20143">
    <property type="entry name" value="NAD_kinase_C"/>
    <property type="match status" value="1"/>
</dbReference>
<dbReference type="SUPFAM" id="SSF111331">
    <property type="entry name" value="NAD kinase/diacylglycerol kinase-like"/>
    <property type="match status" value="1"/>
</dbReference>
<proteinExistence type="inferred from homology"/>
<comment type="function">
    <text evidence="1">Involved in the regulation of the intracellular balance of NAD and NADP, and is a key enzyme in the biosynthesis of NADP. Catalyzes specifically the phosphorylation on 2'-hydroxyl of the adenosine moiety of NAD to yield NADP.</text>
</comment>
<comment type="catalytic activity">
    <reaction evidence="1">
        <text>NAD(+) + ATP = ADP + NADP(+) + H(+)</text>
        <dbReference type="Rhea" id="RHEA:18629"/>
        <dbReference type="ChEBI" id="CHEBI:15378"/>
        <dbReference type="ChEBI" id="CHEBI:30616"/>
        <dbReference type="ChEBI" id="CHEBI:57540"/>
        <dbReference type="ChEBI" id="CHEBI:58349"/>
        <dbReference type="ChEBI" id="CHEBI:456216"/>
        <dbReference type="EC" id="2.7.1.23"/>
    </reaction>
</comment>
<comment type="cofactor">
    <cofactor evidence="1">
        <name>a divalent metal cation</name>
        <dbReference type="ChEBI" id="CHEBI:60240"/>
    </cofactor>
</comment>
<comment type="subcellular location">
    <subcellularLocation>
        <location evidence="1">Cytoplasm</location>
    </subcellularLocation>
</comment>
<comment type="similarity">
    <text evidence="1">Belongs to the NAD kinase family.</text>
</comment>
<organism>
    <name type="scientific">Staphylococcus epidermidis (strain ATCC 35984 / DSM 28319 / BCRC 17069 / CCUG 31568 / BM 3577 / RP62A)</name>
    <dbReference type="NCBI Taxonomy" id="176279"/>
    <lineage>
        <taxon>Bacteria</taxon>
        <taxon>Bacillati</taxon>
        <taxon>Bacillota</taxon>
        <taxon>Bacilli</taxon>
        <taxon>Bacillales</taxon>
        <taxon>Staphylococcaceae</taxon>
        <taxon>Staphylococcus</taxon>
    </lineage>
</organism>
<protein>
    <recommendedName>
        <fullName evidence="1">NAD kinase</fullName>
        <ecNumber evidence="1">2.7.1.23</ecNumber>
    </recommendedName>
    <alternativeName>
        <fullName evidence="1">ATP-dependent NAD kinase</fullName>
    </alternativeName>
</protein>
<keyword id="KW-0067">ATP-binding</keyword>
<keyword id="KW-0963">Cytoplasm</keyword>
<keyword id="KW-0418">Kinase</keyword>
<keyword id="KW-0520">NAD</keyword>
<keyword id="KW-0521">NADP</keyword>
<keyword id="KW-0547">Nucleotide-binding</keyword>
<keyword id="KW-1185">Reference proteome</keyword>
<keyword id="KW-0808">Transferase</keyword>
<feature type="chain" id="PRO_0000120665" description="NAD kinase">
    <location>
        <begin position="1"/>
        <end position="269"/>
    </location>
</feature>
<feature type="active site" description="Proton acceptor" evidence="1">
    <location>
        <position position="45"/>
    </location>
</feature>
<feature type="binding site" evidence="1">
    <location>
        <begin position="45"/>
        <end position="46"/>
    </location>
    <ligand>
        <name>NAD(+)</name>
        <dbReference type="ChEBI" id="CHEBI:57540"/>
    </ligand>
</feature>
<feature type="binding site" evidence="1">
    <location>
        <begin position="122"/>
        <end position="123"/>
    </location>
    <ligand>
        <name>NAD(+)</name>
        <dbReference type="ChEBI" id="CHEBI:57540"/>
    </ligand>
</feature>
<feature type="binding site" evidence="1">
    <location>
        <position position="149"/>
    </location>
    <ligand>
        <name>NAD(+)</name>
        <dbReference type="ChEBI" id="CHEBI:57540"/>
    </ligand>
</feature>
<feature type="binding site" evidence="1">
    <location>
        <position position="151"/>
    </location>
    <ligand>
        <name>NAD(+)</name>
        <dbReference type="ChEBI" id="CHEBI:57540"/>
    </ligand>
</feature>
<feature type="binding site" evidence="1">
    <location>
        <position position="186"/>
    </location>
    <ligand>
        <name>NAD(+)</name>
        <dbReference type="ChEBI" id="CHEBI:57540"/>
    </ligand>
</feature>
<gene>
    <name evidence="1" type="primary">nadK</name>
    <name type="ordered locus">SERP0587</name>
</gene>
<reference key="1">
    <citation type="journal article" date="2005" name="J. Bacteriol.">
        <title>Insights on evolution of virulence and resistance from the complete genome analysis of an early methicillin-resistant Staphylococcus aureus strain and a biofilm-producing methicillin-resistant Staphylococcus epidermidis strain.</title>
        <authorList>
            <person name="Gill S.R."/>
            <person name="Fouts D.E."/>
            <person name="Archer G.L."/>
            <person name="Mongodin E.F."/>
            <person name="DeBoy R.T."/>
            <person name="Ravel J."/>
            <person name="Paulsen I.T."/>
            <person name="Kolonay J.F."/>
            <person name="Brinkac L.M."/>
            <person name="Beanan M.J."/>
            <person name="Dodson R.J."/>
            <person name="Daugherty S.C."/>
            <person name="Madupu R."/>
            <person name="Angiuoli S.V."/>
            <person name="Durkin A.S."/>
            <person name="Haft D.H."/>
            <person name="Vamathevan J.J."/>
            <person name="Khouri H."/>
            <person name="Utterback T.R."/>
            <person name="Lee C."/>
            <person name="Dimitrov G."/>
            <person name="Jiang L."/>
            <person name="Qin H."/>
            <person name="Weidman J."/>
            <person name="Tran K."/>
            <person name="Kang K.H."/>
            <person name="Hance I.R."/>
            <person name="Nelson K.E."/>
            <person name="Fraser C.M."/>
        </authorList>
    </citation>
    <scope>NUCLEOTIDE SEQUENCE [LARGE SCALE GENOMIC DNA]</scope>
    <source>
        <strain>ATCC 35984 / DSM 28319 / BCRC 17069 / CCUG 31568 / BM 3577 / RP62A</strain>
    </source>
</reference>
<name>NADK_STAEQ</name>